<organism>
    <name type="scientific">Streptococcus pyogenes serotype M3 (strain ATCC BAA-595 / MGAS315)</name>
    <dbReference type="NCBI Taxonomy" id="198466"/>
    <lineage>
        <taxon>Bacteria</taxon>
        <taxon>Bacillati</taxon>
        <taxon>Bacillota</taxon>
        <taxon>Bacilli</taxon>
        <taxon>Lactobacillales</taxon>
        <taxon>Streptococcaceae</taxon>
        <taxon>Streptococcus</taxon>
    </lineage>
</organism>
<reference key="1">
    <citation type="journal article" date="2002" name="Proc. Natl. Acad. Sci. U.S.A.">
        <title>Genome sequence of a serotype M3 strain of group A Streptococcus: phage-encoded toxins, the high-virulence phenotype, and clone emergence.</title>
        <authorList>
            <person name="Beres S.B."/>
            <person name="Sylva G.L."/>
            <person name="Barbian K.D."/>
            <person name="Lei B."/>
            <person name="Hoff J.S."/>
            <person name="Mammarella N.D."/>
            <person name="Liu M.-Y."/>
            <person name="Smoot J.C."/>
            <person name="Porcella S.F."/>
            <person name="Parkins L.D."/>
            <person name="Campbell D.S."/>
            <person name="Smith T.M."/>
            <person name="McCormick J.K."/>
            <person name="Leung D.Y.M."/>
            <person name="Schlievert P.M."/>
            <person name="Musser J.M."/>
        </authorList>
    </citation>
    <scope>NUCLEOTIDE SEQUENCE [LARGE SCALE GENOMIC DNA]</scope>
    <source>
        <strain>ATCC BAA-595 / MGAS315</strain>
    </source>
</reference>
<name>ARGR1_STRP3</name>
<feature type="chain" id="PRO_0000205130" description="Arginine regulator">
    <location>
        <begin position="1"/>
        <end position="157"/>
    </location>
</feature>
<accession>P0CZ68</accession>
<accession>Q7CEX2</accession>
<accession>Q879A7</accession>
<comment type="function">
    <text evidence="1">Regulates the transcription of the arc operon, involved in arginine catabolism.</text>
</comment>
<comment type="pathway">
    <text>Amino-acid degradation; L-arginine degradation via ADI pathway.</text>
</comment>
<comment type="subcellular location">
    <subcellularLocation>
        <location evidence="1">Cytoplasm</location>
    </subcellularLocation>
</comment>
<comment type="similarity">
    <text evidence="2">Belongs to the ArgR family.</text>
</comment>
<protein>
    <recommendedName>
        <fullName>Arginine regulator</fullName>
    </recommendedName>
</protein>
<keyword id="KW-0056">Arginine metabolism</keyword>
<keyword id="KW-0963">Cytoplasm</keyword>
<keyword id="KW-0238">DNA-binding</keyword>
<keyword id="KW-0804">Transcription</keyword>
<keyword id="KW-0805">Transcription regulation</keyword>
<dbReference type="EMBL" id="AE014074">
    <property type="protein sequence ID" value="AAM79805.1"/>
    <property type="molecule type" value="Genomic_DNA"/>
</dbReference>
<dbReference type="RefSeq" id="WP_002989056.1">
    <property type="nucleotide sequence ID" value="NC_004070.1"/>
</dbReference>
<dbReference type="SMR" id="P0CZ68"/>
<dbReference type="KEGG" id="spg:SpyM3_1198"/>
<dbReference type="HOGENOM" id="CLU_097103_3_1_9"/>
<dbReference type="UniPathway" id="UPA00254"/>
<dbReference type="Proteomes" id="UP000000564">
    <property type="component" value="Chromosome"/>
</dbReference>
<dbReference type="GO" id="GO:0005737">
    <property type="term" value="C:cytoplasm"/>
    <property type="evidence" value="ECO:0007669"/>
    <property type="project" value="UniProtKB-SubCell"/>
</dbReference>
<dbReference type="GO" id="GO:0034618">
    <property type="term" value="F:arginine binding"/>
    <property type="evidence" value="ECO:0007669"/>
    <property type="project" value="InterPro"/>
</dbReference>
<dbReference type="GO" id="GO:0003677">
    <property type="term" value="F:DNA binding"/>
    <property type="evidence" value="ECO:0007669"/>
    <property type="project" value="UniProtKB-KW"/>
</dbReference>
<dbReference type="GO" id="GO:0003700">
    <property type="term" value="F:DNA-binding transcription factor activity"/>
    <property type="evidence" value="ECO:0007669"/>
    <property type="project" value="UniProtKB-UniRule"/>
</dbReference>
<dbReference type="GO" id="GO:0019547">
    <property type="term" value="P:arginine catabolic process to ornithine"/>
    <property type="evidence" value="ECO:0007669"/>
    <property type="project" value="UniProtKB-UniPathway"/>
</dbReference>
<dbReference type="GO" id="GO:0051259">
    <property type="term" value="P:protein complex oligomerization"/>
    <property type="evidence" value="ECO:0007669"/>
    <property type="project" value="InterPro"/>
</dbReference>
<dbReference type="GO" id="GO:1900079">
    <property type="term" value="P:regulation of arginine biosynthetic process"/>
    <property type="evidence" value="ECO:0007669"/>
    <property type="project" value="UniProtKB-UniRule"/>
</dbReference>
<dbReference type="Gene3D" id="3.30.1360.40">
    <property type="match status" value="1"/>
</dbReference>
<dbReference type="Gene3D" id="1.10.10.10">
    <property type="entry name" value="Winged helix-like DNA-binding domain superfamily/Winged helix DNA-binding domain"/>
    <property type="match status" value="1"/>
</dbReference>
<dbReference type="HAMAP" id="MF_00173">
    <property type="entry name" value="Arg_repressor"/>
    <property type="match status" value="1"/>
</dbReference>
<dbReference type="InterPro" id="IPR001669">
    <property type="entry name" value="Arg_repress"/>
</dbReference>
<dbReference type="InterPro" id="IPR020899">
    <property type="entry name" value="Arg_repress_C"/>
</dbReference>
<dbReference type="InterPro" id="IPR036251">
    <property type="entry name" value="Arg_repress_C_sf"/>
</dbReference>
<dbReference type="InterPro" id="IPR020900">
    <property type="entry name" value="Arg_repress_DNA-bd"/>
</dbReference>
<dbReference type="InterPro" id="IPR036388">
    <property type="entry name" value="WH-like_DNA-bd_sf"/>
</dbReference>
<dbReference type="InterPro" id="IPR036390">
    <property type="entry name" value="WH_DNA-bd_sf"/>
</dbReference>
<dbReference type="PANTHER" id="PTHR34471">
    <property type="entry name" value="ARGININE REPRESSOR"/>
    <property type="match status" value="1"/>
</dbReference>
<dbReference type="PANTHER" id="PTHR34471:SF1">
    <property type="entry name" value="ARGININE REPRESSOR"/>
    <property type="match status" value="1"/>
</dbReference>
<dbReference type="Pfam" id="PF01316">
    <property type="entry name" value="Arg_repressor"/>
    <property type="match status" value="1"/>
</dbReference>
<dbReference type="Pfam" id="PF02863">
    <property type="entry name" value="Arg_repressor_C"/>
    <property type="match status" value="1"/>
</dbReference>
<dbReference type="PRINTS" id="PR01467">
    <property type="entry name" value="ARGREPRESSOR"/>
</dbReference>
<dbReference type="SUPFAM" id="SSF55252">
    <property type="entry name" value="C-terminal domain of arginine repressor"/>
    <property type="match status" value="1"/>
</dbReference>
<dbReference type="SUPFAM" id="SSF46785">
    <property type="entry name" value="Winged helix' DNA-binding domain"/>
    <property type="match status" value="1"/>
</dbReference>
<sequence length="157" mass="18011">MNKKETRHQLIRSLISETTIHTQQELQERLQKNGITITQATLSRDMKELNLVKVTSGNDTHYEALAISQTRWEHRLRFYMEDALVMLKIVQHQIILKTLPGLAQSFGSILDAMQIPEIVATVCGDDTCLIVCEDNEQAKACYETLSHYTPPFFFSNK</sequence>
<gene>
    <name type="primary">argR1</name>
    <name type="ordered locus">SpyM3_1198</name>
</gene>
<evidence type="ECO:0000250" key="1"/>
<evidence type="ECO:0000305" key="2"/>
<proteinExistence type="inferred from homology"/>